<gene>
    <name evidence="1" type="primary">rpl15</name>
    <name type="ordered locus">NP_4898A</name>
</gene>
<keyword id="KW-1185">Reference proteome</keyword>
<keyword id="KW-0687">Ribonucleoprotein</keyword>
<keyword id="KW-0689">Ribosomal protein</keyword>
<keyword id="KW-0694">RNA-binding</keyword>
<keyword id="KW-0699">rRNA-binding</keyword>
<accession>Q3IMW6</accession>
<sequence length="163" mass="17918">MSKKRRQRGSRTHGGGSHKNRRGAGHRGGRGNAGRDKHEFHNHEPLGKSGFKRPQKTRRDVETVNLRELDEDIAVLVEDGIAEESDDGYVVDARDVVEDGYEADVVKVLGAGTVYNELEIVADAFSESAEQALEVADGEAVLSERGEELEAEKDSTDEEDEES</sequence>
<proteinExistence type="inferred from homology"/>
<organism>
    <name type="scientific">Natronomonas pharaonis (strain ATCC 35678 / DSM 2160 / CIP 103997 / JCM 8858 / NBRC 14720 / NCIMB 2260 / Gabara)</name>
    <name type="common">Halobacterium pharaonis</name>
    <dbReference type="NCBI Taxonomy" id="348780"/>
    <lineage>
        <taxon>Archaea</taxon>
        <taxon>Methanobacteriati</taxon>
        <taxon>Methanobacteriota</taxon>
        <taxon>Stenosarchaea group</taxon>
        <taxon>Halobacteria</taxon>
        <taxon>Halobacteriales</taxon>
        <taxon>Haloarculaceae</taxon>
        <taxon>Natronomonas</taxon>
    </lineage>
</organism>
<feature type="chain" id="PRO_0000104868" description="Large ribosomal subunit protein uL15">
    <location>
        <begin position="1"/>
        <end position="163"/>
    </location>
</feature>
<feature type="region of interest" description="Disordered" evidence="2">
    <location>
        <begin position="1"/>
        <end position="59"/>
    </location>
</feature>
<feature type="region of interest" description="Disordered" evidence="2">
    <location>
        <begin position="135"/>
        <end position="163"/>
    </location>
</feature>
<feature type="compositionally biased region" description="Basic residues" evidence="2">
    <location>
        <begin position="1"/>
        <end position="29"/>
    </location>
</feature>
<feature type="compositionally biased region" description="Basic and acidic residues" evidence="2">
    <location>
        <begin position="33"/>
        <end position="46"/>
    </location>
</feature>
<feature type="compositionally biased region" description="Basic and acidic residues" evidence="2">
    <location>
        <begin position="142"/>
        <end position="154"/>
    </location>
</feature>
<comment type="function">
    <text evidence="1">Binds to the 23S rRNA.</text>
</comment>
<comment type="subunit">
    <text evidence="1">Part of the 50S ribosomal subunit.</text>
</comment>
<comment type="similarity">
    <text evidence="1">Belongs to the universal ribosomal protein uL15 family.</text>
</comment>
<protein>
    <recommendedName>
        <fullName evidence="1">Large ribosomal subunit protein uL15</fullName>
    </recommendedName>
    <alternativeName>
        <fullName evidence="3">50S ribosomal protein L15</fullName>
    </alternativeName>
</protein>
<reference key="1">
    <citation type="journal article" date="2005" name="Genome Res.">
        <title>Living with two extremes: conclusions from the genome sequence of Natronomonas pharaonis.</title>
        <authorList>
            <person name="Falb M."/>
            <person name="Pfeiffer F."/>
            <person name="Palm P."/>
            <person name="Rodewald K."/>
            <person name="Hickmann V."/>
            <person name="Tittor J."/>
            <person name="Oesterhelt D."/>
        </authorList>
    </citation>
    <scope>NUCLEOTIDE SEQUENCE [LARGE SCALE GENOMIC DNA]</scope>
    <source>
        <strain>ATCC 35678 / DSM 2160 / CIP 103997 / JCM 8858 / NBRC 14720 / NCIMB 2260 / Gabara</strain>
    </source>
</reference>
<evidence type="ECO:0000255" key="1">
    <source>
        <dbReference type="HAMAP-Rule" id="MF_01341"/>
    </source>
</evidence>
<evidence type="ECO:0000256" key="2">
    <source>
        <dbReference type="SAM" id="MobiDB-lite"/>
    </source>
</evidence>
<evidence type="ECO:0000305" key="3"/>
<dbReference type="EMBL" id="CR936257">
    <property type="protein sequence ID" value="CAI50540.1"/>
    <property type="molecule type" value="Genomic_DNA"/>
</dbReference>
<dbReference type="SMR" id="Q3IMW6"/>
<dbReference type="STRING" id="348780.NP_4898A"/>
<dbReference type="EnsemblBacteria" id="CAI50540">
    <property type="protein sequence ID" value="CAI50540"/>
    <property type="gene ID" value="NP_4898A"/>
</dbReference>
<dbReference type="KEGG" id="nph:NP_4898A"/>
<dbReference type="eggNOG" id="arCOG00779">
    <property type="taxonomic scope" value="Archaea"/>
</dbReference>
<dbReference type="HOGENOM" id="CLU_109163_0_0_2"/>
<dbReference type="Proteomes" id="UP000002698">
    <property type="component" value="Chromosome"/>
</dbReference>
<dbReference type="GO" id="GO:0022625">
    <property type="term" value="C:cytosolic large ribosomal subunit"/>
    <property type="evidence" value="ECO:0007669"/>
    <property type="project" value="TreeGrafter"/>
</dbReference>
<dbReference type="GO" id="GO:0019843">
    <property type="term" value="F:rRNA binding"/>
    <property type="evidence" value="ECO:0007669"/>
    <property type="project" value="UniProtKB-UniRule"/>
</dbReference>
<dbReference type="GO" id="GO:0003735">
    <property type="term" value="F:structural constituent of ribosome"/>
    <property type="evidence" value="ECO:0007669"/>
    <property type="project" value="InterPro"/>
</dbReference>
<dbReference type="GO" id="GO:0006412">
    <property type="term" value="P:translation"/>
    <property type="evidence" value="ECO:0007669"/>
    <property type="project" value="UniProtKB-UniRule"/>
</dbReference>
<dbReference type="Gene3D" id="3.100.10.10">
    <property type="match status" value="1"/>
</dbReference>
<dbReference type="Gene3D" id="4.10.990.10">
    <property type="match status" value="1"/>
</dbReference>
<dbReference type="HAMAP" id="MF_01341">
    <property type="entry name" value="Ribosomal_uL15"/>
    <property type="match status" value="1"/>
</dbReference>
<dbReference type="InterPro" id="IPR027386">
    <property type="entry name" value="Rbsml_uL15_N"/>
</dbReference>
<dbReference type="InterPro" id="IPR030878">
    <property type="entry name" value="Ribosomal_uL15"/>
</dbReference>
<dbReference type="InterPro" id="IPR021131">
    <property type="entry name" value="Ribosomal_uL15/eL18"/>
</dbReference>
<dbReference type="InterPro" id="IPR036227">
    <property type="entry name" value="Ribosomal_uL15/eL18_sf"/>
</dbReference>
<dbReference type="PANTHER" id="PTHR11721">
    <property type="entry name" value="60S RIBOSOMAL PROTEIN L27A"/>
    <property type="match status" value="1"/>
</dbReference>
<dbReference type="PANTHER" id="PTHR11721:SF3">
    <property type="entry name" value="LARGE RIBOSOMAL SUBUNIT PROTEIN UL15"/>
    <property type="match status" value="1"/>
</dbReference>
<dbReference type="Pfam" id="PF00828">
    <property type="entry name" value="Ribosomal_L27A"/>
    <property type="match status" value="1"/>
</dbReference>
<dbReference type="SUPFAM" id="SSF52080">
    <property type="entry name" value="Ribosomal proteins L15p and L18e"/>
    <property type="match status" value="1"/>
</dbReference>
<name>RL15_NATPD</name>